<reference key="1">
    <citation type="submission" date="2008-08" db="EMBL/GenBank/DDBJ databases">
        <title>Draft genome sequence of Bacteroides plebeius (DSM 17135).</title>
        <authorList>
            <person name="Sudarsanam P."/>
            <person name="Ley R."/>
            <person name="Guruge J."/>
            <person name="Turnbaugh P.J."/>
            <person name="Mahowald M."/>
            <person name="Liep D."/>
            <person name="Gordon J."/>
        </authorList>
    </citation>
    <scope>NUCLEOTIDE SEQUENCE [LARGE SCALE GENOMIC DNA]</scope>
    <source>
        <strain>DSM 17135 / JCM 12973 / CCUG 54634 / M2</strain>
    </source>
</reference>
<reference key="2">
    <citation type="journal article" date="2010" name="Nature">
        <title>Transfer of carbohydrate-active enzymes from marine bacteria to Japanese gut microbiota.</title>
        <authorList>
            <person name="Hehemann J.H."/>
            <person name="Correc G."/>
            <person name="Barbeyron T."/>
            <person name="Helbert W."/>
            <person name="Czjzek M."/>
            <person name="Michel G."/>
        </authorList>
    </citation>
    <scope>IDENTIFICATION</scope>
    <source>
        <strain>DSM 17135 / JCM 12973 / CCUG 54634 / M2</strain>
    </source>
</reference>
<reference key="3">
    <citation type="journal article" date="2012" name="Proc. Natl. Acad. Sci. U.S.A.">
        <title>Bacteria of the human gut microbiome catabolize red seaweed glycans with carbohydrate-active enzyme updates from extrinsic microbes.</title>
        <authorList>
            <person name="Hehemann J.H."/>
            <person name="Kelly A.G."/>
            <person name="Pudlo N.A."/>
            <person name="Martens E.C."/>
            <person name="Boraston A.B."/>
        </authorList>
    </citation>
    <scope>X-RAY CRYSTALLOGRAPHY (2.40 ANGSTROMS) OF 21-321</scope>
    <scope>FUNCTION</scope>
    <scope>CATALYTIC ACTIVITY</scope>
    <source>
        <strain>DSM 17135 / JCM 12973 / CCUG 54634 / M2</strain>
    </source>
</reference>
<feature type="signal peptide" evidence="3">
    <location>
        <begin position="1"/>
        <end position="20"/>
    </location>
</feature>
<feature type="chain" id="PRO_0000422025" description="Beta-porphyranase B">
    <location>
        <begin position="21"/>
        <end position="321"/>
    </location>
</feature>
<feature type="domain" description="GH16" evidence="4">
    <location>
        <begin position="31"/>
        <end position="319"/>
    </location>
</feature>
<feature type="active site" description="Nucleophile" evidence="2">
    <location>
        <position position="173"/>
    </location>
</feature>
<feature type="active site" description="Proton donor" evidence="2">
    <location>
        <position position="178"/>
    </location>
</feature>
<feature type="binding site" evidence="1">
    <location>
        <position position="72"/>
    </location>
    <ligand>
        <name>substrate</name>
    </ligand>
</feature>
<feature type="binding site" evidence="1">
    <location>
        <position position="76"/>
    </location>
    <ligand>
        <name>substrate</name>
    </ligand>
</feature>
<feature type="binding site" evidence="1">
    <location>
        <position position="173"/>
    </location>
    <ligand>
        <name>substrate</name>
    </ligand>
</feature>
<feature type="binding site" evidence="1">
    <location>
        <position position="178"/>
    </location>
    <ligand>
        <name>substrate</name>
    </ligand>
</feature>
<feature type="binding site" evidence="1">
    <location>
        <position position="284"/>
    </location>
    <ligand>
        <name>substrate</name>
    </ligand>
</feature>
<feature type="helix" evidence="7">
    <location>
        <begin position="27"/>
        <end position="31"/>
    </location>
</feature>
<feature type="helix" evidence="7">
    <location>
        <begin position="32"/>
        <end position="35"/>
    </location>
</feature>
<feature type="strand" evidence="7">
    <location>
        <begin position="43"/>
        <end position="47"/>
    </location>
</feature>
<feature type="helix" evidence="7">
    <location>
        <begin position="49"/>
        <end position="51"/>
    </location>
</feature>
<feature type="strand" evidence="7">
    <location>
        <begin position="57"/>
        <end position="59"/>
    </location>
</feature>
<feature type="turn" evidence="7">
    <location>
        <begin position="62"/>
        <end position="64"/>
    </location>
</feature>
<feature type="strand" evidence="7">
    <location>
        <begin position="65"/>
        <end position="68"/>
    </location>
</feature>
<feature type="strand" evidence="7">
    <location>
        <begin position="70"/>
        <end position="72"/>
    </location>
</feature>
<feature type="strand" evidence="7">
    <location>
        <begin position="79"/>
        <end position="81"/>
    </location>
</feature>
<feature type="helix" evidence="7">
    <location>
        <begin position="83"/>
        <end position="85"/>
    </location>
</feature>
<feature type="strand" evidence="7">
    <location>
        <begin position="86"/>
        <end position="89"/>
    </location>
</feature>
<feature type="strand" evidence="7">
    <location>
        <begin position="92"/>
        <end position="96"/>
    </location>
</feature>
<feature type="strand" evidence="7">
    <location>
        <begin position="98"/>
        <end position="104"/>
    </location>
</feature>
<feature type="helix" evidence="7">
    <location>
        <begin position="106"/>
        <end position="108"/>
    </location>
</feature>
<feature type="strand" evidence="7">
    <location>
        <begin position="110"/>
        <end position="118"/>
    </location>
</feature>
<feature type="strand" evidence="7">
    <location>
        <begin position="120"/>
        <end position="124"/>
    </location>
</feature>
<feature type="strand" evidence="7">
    <location>
        <begin position="130"/>
        <end position="138"/>
    </location>
</feature>
<feature type="strand" evidence="7">
    <location>
        <begin position="141"/>
        <end position="144"/>
    </location>
</feature>
<feature type="strand" evidence="7">
    <location>
        <begin position="146"/>
        <end position="151"/>
    </location>
</feature>
<feature type="strand" evidence="7">
    <location>
        <begin position="155"/>
        <end position="163"/>
    </location>
</feature>
<feature type="strand" evidence="7">
    <location>
        <begin position="165"/>
        <end position="179"/>
    </location>
</feature>
<feature type="turn" evidence="7">
    <location>
        <begin position="192"/>
        <end position="195"/>
    </location>
</feature>
<feature type="helix" evidence="7">
    <location>
        <begin position="196"/>
        <end position="198"/>
    </location>
</feature>
<feature type="strand" evidence="7">
    <location>
        <begin position="201"/>
        <end position="210"/>
    </location>
</feature>
<feature type="strand" evidence="7">
    <location>
        <begin position="216"/>
        <end position="218"/>
    </location>
</feature>
<feature type="strand" evidence="7">
    <location>
        <begin position="222"/>
        <end position="224"/>
    </location>
</feature>
<feature type="turn" evidence="7">
    <location>
        <begin position="233"/>
        <end position="235"/>
    </location>
</feature>
<feature type="strand" evidence="7">
    <location>
        <begin position="238"/>
        <end position="246"/>
    </location>
</feature>
<feature type="strand" evidence="7">
    <location>
        <begin position="249"/>
        <end position="254"/>
    </location>
</feature>
<feature type="strand" evidence="7">
    <location>
        <begin position="257"/>
        <end position="262"/>
    </location>
</feature>
<feature type="strand" evidence="7">
    <location>
        <begin position="277"/>
        <end position="282"/>
    </location>
</feature>
<feature type="turn" evidence="7">
    <location>
        <begin position="295"/>
        <end position="298"/>
    </location>
</feature>
<feature type="turn" evidence="7">
    <location>
        <begin position="301"/>
        <end position="304"/>
    </location>
</feature>
<feature type="strand" evidence="7">
    <location>
        <begin position="305"/>
        <end position="318"/>
    </location>
</feature>
<keyword id="KW-0002">3D-structure</keyword>
<keyword id="KW-0326">Glycosidase</keyword>
<keyword id="KW-0378">Hydrolase</keyword>
<keyword id="KW-0732">Signal</keyword>
<organism>
    <name type="scientific">Phocaeicola plebeius (strain DSM 17135 / JCM 12973 / CCUG 54634 / M2)</name>
    <name type="common">Bacteroides plebeius</name>
    <dbReference type="NCBI Taxonomy" id="484018"/>
    <lineage>
        <taxon>Bacteria</taxon>
        <taxon>Pseudomonadati</taxon>
        <taxon>Bacteroidota</taxon>
        <taxon>Bacteroidia</taxon>
        <taxon>Bacteroidales</taxon>
        <taxon>Bacteroidaceae</taxon>
        <taxon>Phocaeicola</taxon>
    </lineage>
</organism>
<dbReference type="EC" id="3.2.1.178"/>
<dbReference type="EMBL" id="ABQC02000019">
    <property type="protein sequence ID" value="EDY95423.1"/>
    <property type="molecule type" value="Genomic_DNA"/>
</dbReference>
<dbReference type="RefSeq" id="WP_007560951.1">
    <property type="nucleotide sequence ID" value="NZ_DS990130.1"/>
</dbReference>
<dbReference type="PDB" id="4AWD">
    <property type="method" value="X-ray"/>
    <property type="resolution" value="2.40 A"/>
    <property type="chains" value="A/B=21-321"/>
</dbReference>
<dbReference type="PDBsum" id="4AWD"/>
<dbReference type="SMR" id="B5CY92"/>
<dbReference type="CAZy" id="GH16">
    <property type="family name" value="Glycoside Hydrolase Family 16"/>
</dbReference>
<dbReference type="GeneID" id="43184719"/>
<dbReference type="KEGG" id="ag:EDY95423"/>
<dbReference type="eggNOG" id="COG2273">
    <property type="taxonomic scope" value="Bacteria"/>
</dbReference>
<dbReference type="HOGENOM" id="CLU_053494_0_0_10"/>
<dbReference type="OrthoDB" id="9809583at2"/>
<dbReference type="BRENDA" id="3.2.1.178">
    <property type="organism ID" value="14050"/>
</dbReference>
<dbReference type="EvolutionaryTrace" id="B5CY92"/>
<dbReference type="Proteomes" id="UP000003452">
    <property type="component" value="Unassembled WGS sequence"/>
</dbReference>
<dbReference type="GO" id="GO:0033916">
    <property type="term" value="F:beta-agarase activity"/>
    <property type="evidence" value="ECO:0007669"/>
    <property type="project" value="InterPro"/>
</dbReference>
<dbReference type="GO" id="GO:0005975">
    <property type="term" value="P:carbohydrate metabolic process"/>
    <property type="evidence" value="ECO:0007669"/>
    <property type="project" value="InterPro"/>
</dbReference>
<dbReference type="CDD" id="cd02178">
    <property type="entry name" value="GH16_beta_agarase"/>
    <property type="match status" value="1"/>
</dbReference>
<dbReference type="Gene3D" id="2.60.120.200">
    <property type="match status" value="1"/>
</dbReference>
<dbReference type="InterPro" id="IPR016287">
    <property type="entry name" value="Beta_agarase"/>
</dbReference>
<dbReference type="InterPro" id="IPR013320">
    <property type="entry name" value="ConA-like_dom_sf"/>
</dbReference>
<dbReference type="InterPro" id="IPR000757">
    <property type="entry name" value="GH16"/>
</dbReference>
<dbReference type="SUPFAM" id="SSF49899">
    <property type="entry name" value="Concanavalin A-like lectins/glucanases"/>
    <property type="match status" value="1"/>
</dbReference>
<dbReference type="PROSITE" id="PS51762">
    <property type="entry name" value="GH16_2"/>
    <property type="match status" value="1"/>
</dbReference>
<gene>
    <name type="ORF">BACPLE_01689</name>
</gene>
<sequence length="321" mass="37253">MRKTVLYLSAASLFLSSYTLKNDKEYSLAEEHIKNLPEAPEGYKWVVNEDYTDEFNGKRLNAAKWHAKSPYWTNGRPPATFKAENVSVKKGCLRIINTVLSPTEGLDGKPGDKYRLAGGAVASVKNQAHYGYYETRMKASLTTMSSTFWLSNRPVMKEIMKGGKKIKTWSSQELDIIETMGIIRSVNPDNPWNKTWNMQMNSNTHYWYQEQGGKRTDNTAKRSDVVSYMTDPSAEDFHTYGCWWVDANTVKFYYDGKYMYTIKPTTKYTDTPFDRPMFIHIVTETYDWEKQVPTAEDLKDKDKSTTYYDWVRAYKLVPIEE</sequence>
<evidence type="ECO:0000250" key="1">
    <source>
        <dbReference type="UniProtKB" id="D7GXG0"/>
    </source>
</evidence>
<evidence type="ECO:0000250" key="2">
    <source>
        <dbReference type="UniProtKB" id="G0L322"/>
    </source>
</evidence>
<evidence type="ECO:0000255" key="3"/>
<evidence type="ECO:0000255" key="4">
    <source>
        <dbReference type="PROSITE-ProRule" id="PRU01098"/>
    </source>
</evidence>
<evidence type="ECO:0000269" key="5">
    <source>
    </source>
</evidence>
<evidence type="ECO:0000305" key="6"/>
<evidence type="ECO:0007829" key="7">
    <source>
        <dbReference type="PDB" id="4AWD"/>
    </source>
</evidence>
<name>PORB_PHOPM</name>
<comment type="function">
    <text evidence="5">Cleaves the sulfated polysaccharide porphyran at the (1-&gt;4) linkages between beta-D-galactopyranose and alpha-L-galactopyranose-6-sulfate, forming mostly the disaccharide alpha-L-galactopyranose-6-sulfate-(1-&gt;3)-beta-D-galactose. Some longer oligosaccharides of even number of residues are also observed. Inactive on the non-sulfated agarose portion of the porphyran backbone.</text>
</comment>
<comment type="catalytic activity">
    <reaction evidence="5">
        <text>Hydrolysis of beta-D-galactopyranose-(1-&gt;4)-alpha-L-galactopyranose-6-sulfate linkages in porphyran.</text>
        <dbReference type="EC" id="3.2.1.178"/>
    </reaction>
</comment>
<comment type="miscellaneous">
    <text>Gut bacteria supply the human body with energy from dietary polysaccharides through glycosidases that are absent in the human genome. Beta-porphyranases, which are active on sulfated polysaccharides from marine red algae of the genus Porphyra, are present in marine bacteria. They are absent from metagenome data of gut bacteria, except from the genome of the gut bacterium B.plebeius isolated from Japanese individuals. Seaweeds make an important contribution to the diet in Japan and Porphyra (nori) is the most important nutritional seaweed used to prepare sushi, suggesting that seaweeds with associated marine bacteria have been the route by which genes coding for beta-porphyranases have been transferred in human gut B.plebeius genome (PubMed:20376150, PubMed:23150581).</text>
</comment>
<comment type="similarity">
    <text evidence="6">Belongs to the glycosyl hydrolase 16 family.</text>
</comment>
<comment type="online information" name="Protein Spotlight">
    <link uri="https://www.proteinspotlight.org/back_issues/158/"/>
    <text>A gut's tale - Issue 158 of March 2014</text>
</comment>
<accession>B5CY92</accession>
<protein>
    <recommendedName>
        <fullName>Beta-porphyranase B</fullName>
        <ecNumber>3.2.1.178</ecNumber>
    </recommendedName>
    <alternativeName>
        <fullName>Glycosyl hydrolase 86 family protein B</fullName>
        <shortName>GH16B</shortName>
    </alternativeName>
</protein>
<proteinExistence type="evidence at protein level"/>